<evidence type="ECO:0000250" key="1">
    <source>
        <dbReference type="UniProtKB" id="P59367"/>
    </source>
</evidence>
<evidence type="ECO:0000255" key="2"/>
<evidence type="ECO:0000269" key="3">
    <source>
    </source>
</evidence>
<evidence type="ECO:0000269" key="4">
    <source>
    </source>
</evidence>
<evidence type="ECO:0000269" key="5">
    <source>
    </source>
</evidence>
<evidence type="ECO:0000269" key="6">
    <source>
    </source>
</evidence>
<evidence type="ECO:0000269" key="7">
    <source>
    </source>
</evidence>
<evidence type="ECO:0000303" key="8">
    <source>
    </source>
</evidence>
<evidence type="ECO:0000303" key="9">
    <source>
    </source>
</evidence>
<evidence type="ECO:0000303" key="10">
    <source>
    </source>
</evidence>
<evidence type="ECO:0000303" key="11">
    <source>
    </source>
</evidence>
<evidence type="ECO:0000305" key="12"/>
<evidence type="ECO:0000305" key="13">
    <source>
    </source>
</evidence>
<dbReference type="SMR" id="P59368"/>
<dbReference type="ArachnoServer" id="AS000280">
    <property type="toxin name" value="delta-ctenitoxin-Pn1a"/>
</dbReference>
<dbReference type="GO" id="GO:0005576">
    <property type="term" value="C:extracellular region"/>
    <property type="evidence" value="ECO:0007669"/>
    <property type="project" value="UniProtKB-SubCell"/>
</dbReference>
<dbReference type="GO" id="GO:0035792">
    <property type="term" value="C:host cell postsynaptic membrane"/>
    <property type="evidence" value="ECO:0007669"/>
    <property type="project" value="UniProtKB-KW"/>
</dbReference>
<dbReference type="GO" id="GO:0017080">
    <property type="term" value="F:sodium channel regulator activity"/>
    <property type="evidence" value="ECO:0007669"/>
    <property type="project" value="UniProtKB-KW"/>
</dbReference>
<dbReference type="GO" id="GO:0090729">
    <property type="term" value="F:toxin activity"/>
    <property type="evidence" value="ECO:0007669"/>
    <property type="project" value="UniProtKB-KW"/>
</dbReference>
<organism>
    <name type="scientific">Phoneutria nigriventer</name>
    <name type="common">Brazilian armed spider</name>
    <name type="synonym">Ctenus nigriventer</name>
    <dbReference type="NCBI Taxonomy" id="6918"/>
    <lineage>
        <taxon>Eukaryota</taxon>
        <taxon>Metazoa</taxon>
        <taxon>Ecdysozoa</taxon>
        <taxon>Arthropoda</taxon>
        <taxon>Chelicerata</taxon>
        <taxon>Arachnida</taxon>
        <taxon>Araneae</taxon>
        <taxon>Araneomorphae</taxon>
        <taxon>Entelegynae</taxon>
        <taxon>Lycosoidea</taxon>
        <taxon>Ctenidae</taxon>
        <taxon>Phoneutria</taxon>
    </lineage>
</organism>
<feature type="signal peptide" evidence="2">
    <location>
        <begin position="1"/>
        <end position="16"/>
    </location>
</feature>
<feature type="propeptide" id="PRO_0000035509" evidence="5 7">
    <location>
        <begin position="17"/>
        <end position="34"/>
    </location>
</feature>
<feature type="chain" id="PRO_0000035510" description="Delta-ctenitoxin-Pn1a" evidence="7">
    <location>
        <begin position="35"/>
        <end position="82"/>
    </location>
</feature>
<feature type="disulfide bond" evidence="12">
    <location>
        <begin position="35"/>
        <end position="49"/>
    </location>
</feature>
<feature type="disulfide bond" evidence="12">
    <location>
        <begin position="42"/>
        <end position="55"/>
    </location>
</feature>
<feature type="disulfide bond" evidence="12">
    <location>
        <begin position="46"/>
        <end position="82"/>
    </location>
</feature>
<feature type="disulfide bond" evidence="12">
    <location>
        <begin position="48"/>
        <end position="65"/>
    </location>
</feature>
<feature type="disulfide bond" evidence="12">
    <location>
        <begin position="57"/>
        <end position="63"/>
    </location>
</feature>
<name>TX35D_PHONI</name>
<keyword id="KW-0903">Direct protein sequencing</keyword>
<keyword id="KW-1015">Disulfide bond</keyword>
<keyword id="KW-0872">Ion channel impairing toxin</keyword>
<keyword id="KW-1028">Ionotropic glutamate receptor inhibitor</keyword>
<keyword id="KW-0960">Knottin</keyword>
<keyword id="KW-0528">Neurotoxin</keyword>
<keyword id="KW-0629">Postsynaptic neurotoxin</keyword>
<keyword id="KW-0964">Secreted</keyword>
<keyword id="KW-0732">Signal</keyword>
<keyword id="KW-0800">Toxin</keyword>
<keyword id="KW-0738">Voltage-gated sodium channel impairing toxin</keyword>
<reference key="1">
    <citation type="journal article" date="2000" name="Toxicon">
        <title>Molecular cloning of cDNAs encoding insecticidal neurotoxic peptides from the spider Phoneutria nigriventer.</title>
        <authorList>
            <person name="Penaforte C.L."/>
            <person name="Prado V.F."/>
            <person name="Prado M.A.M."/>
            <person name="Romano-Silva M.A."/>
            <person name="Guimaraes P.E.M."/>
            <person name="De Marco L."/>
            <person name="Gomez M.V."/>
            <person name="Kalapothakis E."/>
        </authorList>
    </citation>
    <scope>NUCLEOTIDE SEQUENCE [MRNA]</scope>
    <source>
        <tissue>Venom gland</tissue>
    </source>
</reference>
<reference key="2">
    <citation type="journal article" date="1995" name="Toxicon">
        <title>Purification and amino acid sequence of the insecticidal neurotoxin Tx4(6-1) from the venom of the 'armed' spider Phoneutria nigriventer (Keys).</title>
        <authorList>
            <person name="Figueiredo S.G."/>
            <person name="Lima-Perez Garcia M.E."/>
            <person name="Valentim A.D.C."/>
            <person name="Cordeiro M.N."/>
            <person name="Diniz C.R."/>
            <person name="Richardson M."/>
        </authorList>
    </citation>
    <scope>PROTEIN SEQUENCE OF 35-82</scope>
    <scope>FUNCTION</scope>
    <scope>MASS SPECTROMETRY</scope>
    <scope>TOXIC DOSE</scope>
    <scope>SUBCELLULAR LOCATION</scope>
    <source>
        <tissue>Venom</tissue>
    </source>
</reference>
<reference key="3">
    <citation type="journal article" date="2006" name="Comp. Biochem. Physiol.">
        <title>Comparison of the partial proteomes of the venoms of Brazilian spiders of the genus Phoneutria.</title>
        <authorList>
            <person name="Richardson M."/>
            <person name="Pimenta A.M."/>
            <person name="Bemquerer M.P."/>
            <person name="Santoro M.M."/>
            <person name="Beirao P.S."/>
            <person name="Lima M.E."/>
            <person name="Figueiredo S.G."/>
            <person name="Bloch C. Jr."/>
            <person name="Vasconcelos E.A."/>
            <person name="Campos F.A."/>
            <person name="Gomes P.C."/>
            <person name="Cordeiro M.N."/>
        </authorList>
    </citation>
    <scope>PROTEIN SEQUENCE OF 35-82</scope>
    <source>
        <tissue>Venom</tissue>
    </source>
</reference>
<reference key="4">
    <citation type="journal article" date="2002" name="J. Insect Physiol.">
        <title>The toxin Tx4(6-1) from the spider Phoneutria nigriventer slows down Na(+) current inactivation in insect CNS via binding to receptor site 3.</title>
        <authorList>
            <person name="de Lima M.E."/>
            <person name="Stankiewicz M."/>
            <person name="Hamon A."/>
            <person name="de Figueiredo S.G."/>
            <person name="Cordeiro M.N."/>
            <person name="Diniz C.R."/>
            <person name="Martin-Eauclaire M.-F."/>
            <person name="Pelhate M."/>
        </authorList>
    </citation>
    <scope>FUNCTION</scope>
    <source>
        <tissue>Venom</tissue>
    </source>
</reference>
<reference key="5">
    <citation type="journal article" date="2003" name="Toxicon">
        <title>PnTx4-3, a new insect toxin from Phoneutria nigriventer venom elicits the glutamate uptake inhibition exhibited by PhTx4 toxic fraction.</title>
        <authorList>
            <person name="Oliveira L.C."/>
            <person name="De Lima M.E."/>
            <person name="Pimenta A.M.C."/>
            <person name="Mansuelle P."/>
            <person name="Rochat H."/>
            <person name="Cordeiro M.N."/>
            <person name="Richardson M."/>
            <person name="Figueiredo S.G."/>
        </authorList>
    </citation>
    <scope>FUNCTION</scope>
</reference>
<reference key="6">
    <citation type="journal article" date="2016" name="Toxins">
        <title>Delta-ctenitoxin-Pn1a, a peptide from Phoneutria nigriventer spider venom, shows antinociceptive effect involving opioid and cannabinoid systems, in rats.</title>
        <authorList>
            <person name="Emerich B.L."/>
            <person name="Ferreira R.C."/>
            <person name="Cordeiro M.N."/>
            <person name="Borges M.H."/>
            <person name="Pimenta A.M."/>
            <person name="Figueiredo S.G."/>
            <person name="Duarte I.D."/>
            <person name="de Lima M.E."/>
        </authorList>
    </citation>
    <scope>FUNCTION</scope>
</reference>
<proteinExistence type="evidence at protein level"/>
<comment type="function">
    <text evidence="1 3 4 6 7">This neurotoxin binds at site 3 of insect voltage-activated sodium channels (Nav) and prolongs evoked axonal action potentials by a slowing down of sodium current inactivation (PubMed:12770132). The toxin also inhibits glutamate uptake from rat brain synaptosomes (PubMed:14757211). It reversibly inhibits the N-methyl-D-aspartate (NMDA)-subtype of ionotropic glutamate receptor (GRIN) (By similarity). In addition, the toxin shows antinociceptive effect in all rat pain models tested (inflammatory, neuropathic and nociceptive) (PubMed:27077886). The antinociceptive effect is partially blocked when selective antagonists of both mu- and delta-opioid receptors are administered, revealing that the antinociceptive effect of the toxin involves both opioid and cannabinoid endogenous systems (PubMed:27077886). In vivo, it is highly toxic to house fly (Musca domestica), toxic to cockroach, but has no effect when intracerebroventricularly injected into mice (PubMed:12770132, PubMed:7778132).</text>
</comment>
<comment type="subcellular location">
    <subcellularLocation>
        <location evidence="7">Secreted</location>
    </subcellularLocation>
</comment>
<comment type="tissue specificity">
    <text evidence="13">Expressed by the venom gland.</text>
</comment>
<comment type="domain">
    <text evidence="12">The presence of a 'disulfide through disulfide knot' structurally defines this protein as a knottin.</text>
</comment>
<comment type="mass spectrometry" mass="5244.6" method="Plasma desorption" evidence="7"/>
<comment type="toxic dose">
    <text evidence="7">LD(50) is 3.8 ng/house fly.</text>
</comment>
<comment type="miscellaneous">
    <text evidence="3">Negative results: does not affect the currents in rat brain Nav1.2/SCN2A or skeletal muscle Nav1.4/SCN4A sodium channels.</text>
</comment>
<comment type="similarity">
    <text evidence="12">Belongs to the neurotoxin 03 (Tx2) family. 05 subfamily.</text>
</comment>
<accession>P59368</accession>
<sequence length="82" mass="9088">MKVAIVFLSLLVLAFASESIEENREEFPVEESARCGDINAACKEDCDCCGYTTACDCYWSKSCKCREAAIVIYTAPKKKLTC</sequence>
<protein>
    <recommendedName>
        <fullName evidence="10">Delta-ctenitoxin-Pn1a</fullName>
        <shortName evidence="10">Delta-CNTX-Pn1a</shortName>
    </recommendedName>
    <alternativeName>
        <fullName evidence="11">Insecticidal neurotoxin Tx4(6-1)</fullName>
        <shortName evidence="8 9 11">PnTx4(6-1)</shortName>
    </alternativeName>
</protein>